<accession>Q8Q0U5</accession>
<dbReference type="EC" id="6.3.4.5" evidence="1"/>
<dbReference type="EMBL" id="AE008384">
    <property type="protein sequence ID" value="AAM29733.1"/>
    <property type="status" value="ALT_INIT"/>
    <property type="molecule type" value="Genomic_DNA"/>
</dbReference>
<dbReference type="RefSeq" id="WP_011031991.1">
    <property type="nucleotide sequence ID" value="NC_003901.1"/>
</dbReference>
<dbReference type="SMR" id="Q8Q0U5"/>
<dbReference type="GeneID" id="1478379"/>
<dbReference type="KEGG" id="mma:MM_0037"/>
<dbReference type="PATRIC" id="fig|192952.21.peg.49"/>
<dbReference type="eggNOG" id="arCOG00112">
    <property type="taxonomic scope" value="Archaea"/>
</dbReference>
<dbReference type="HOGENOM" id="CLU_032784_4_0_2"/>
<dbReference type="UniPathway" id="UPA00068">
    <property type="reaction ID" value="UER00113"/>
</dbReference>
<dbReference type="Proteomes" id="UP000000595">
    <property type="component" value="Chromosome"/>
</dbReference>
<dbReference type="GO" id="GO:0005737">
    <property type="term" value="C:cytoplasm"/>
    <property type="evidence" value="ECO:0007669"/>
    <property type="project" value="UniProtKB-SubCell"/>
</dbReference>
<dbReference type="GO" id="GO:0004055">
    <property type="term" value="F:argininosuccinate synthase activity"/>
    <property type="evidence" value="ECO:0007669"/>
    <property type="project" value="UniProtKB-UniRule"/>
</dbReference>
<dbReference type="GO" id="GO:0005524">
    <property type="term" value="F:ATP binding"/>
    <property type="evidence" value="ECO:0007669"/>
    <property type="project" value="UniProtKB-UniRule"/>
</dbReference>
<dbReference type="GO" id="GO:0000053">
    <property type="term" value="P:argininosuccinate metabolic process"/>
    <property type="evidence" value="ECO:0007669"/>
    <property type="project" value="TreeGrafter"/>
</dbReference>
<dbReference type="GO" id="GO:0006526">
    <property type="term" value="P:L-arginine biosynthetic process"/>
    <property type="evidence" value="ECO:0007669"/>
    <property type="project" value="UniProtKB-UniRule"/>
</dbReference>
<dbReference type="GO" id="GO:0000050">
    <property type="term" value="P:urea cycle"/>
    <property type="evidence" value="ECO:0007669"/>
    <property type="project" value="TreeGrafter"/>
</dbReference>
<dbReference type="CDD" id="cd01999">
    <property type="entry name" value="ASS"/>
    <property type="match status" value="1"/>
</dbReference>
<dbReference type="FunFam" id="3.40.50.620:FF:000019">
    <property type="entry name" value="Argininosuccinate synthase"/>
    <property type="match status" value="1"/>
</dbReference>
<dbReference type="FunFam" id="3.90.1260.10:FF:000007">
    <property type="entry name" value="Argininosuccinate synthase"/>
    <property type="match status" value="1"/>
</dbReference>
<dbReference type="Gene3D" id="3.90.1260.10">
    <property type="entry name" value="Argininosuccinate synthetase, chain A, domain 2"/>
    <property type="match status" value="1"/>
</dbReference>
<dbReference type="Gene3D" id="3.40.50.620">
    <property type="entry name" value="HUPs"/>
    <property type="match status" value="1"/>
</dbReference>
<dbReference type="HAMAP" id="MF_00005">
    <property type="entry name" value="Arg_succ_synth_type1"/>
    <property type="match status" value="1"/>
</dbReference>
<dbReference type="InterPro" id="IPR048268">
    <property type="entry name" value="Arginosuc_syn_C"/>
</dbReference>
<dbReference type="InterPro" id="IPR048267">
    <property type="entry name" value="Arginosuc_syn_N"/>
</dbReference>
<dbReference type="InterPro" id="IPR001518">
    <property type="entry name" value="Arginosuc_synth"/>
</dbReference>
<dbReference type="InterPro" id="IPR018223">
    <property type="entry name" value="Arginosuc_synth_CS"/>
</dbReference>
<dbReference type="InterPro" id="IPR023434">
    <property type="entry name" value="Arginosuc_synth_type_1_subfam"/>
</dbReference>
<dbReference type="InterPro" id="IPR024074">
    <property type="entry name" value="AS_cat/multimer_dom_body"/>
</dbReference>
<dbReference type="InterPro" id="IPR014729">
    <property type="entry name" value="Rossmann-like_a/b/a_fold"/>
</dbReference>
<dbReference type="NCBIfam" id="TIGR00032">
    <property type="entry name" value="argG"/>
    <property type="match status" value="1"/>
</dbReference>
<dbReference type="NCBIfam" id="NF001770">
    <property type="entry name" value="PRK00509.1"/>
    <property type="match status" value="1"/>
</dbReference>
<dbReference type="NCBIfam" id="NF010392">
    <property type="entry name" value="PRK13820.1"/>
    <property type="match status" value="1"/>
</dbReference>
<dbReference type="PANTHER" id="PTHR11587">
    <property type="entry name" value="ARGININOSUCCINATE SYNTHASE"/>
    <property type="match status" value="1"/>
</dbReference>
<dbReference type="PANTHER" id="PTHR11587:SF2">
    <property type="entry name" value="ARGININOSUCCINATE SYNTHASE"/>
    <property type="match status" value="1"/>
</dbReference>
<dbReference type="Pfam" id="PF20979">
    <property type="entry name" value="Arginosuc_syn_C"/>
    <property type="match status" value="1"/>
</dbReference>
<dbReference type="Pfam" id="PF00764">
    <property type="entry name" value="Arginosuc_synth"/>
    <property type="match status" value="1"/>
</dbReference>
<dbReference type="SUPFAM" id="SSF52402">
    <property type="entry name" value="Adenine nucleotide alpha hydrolases-like"/>
    <property type="match status" value="1"/>
</dbReference>
<dbReference type="SUPFAM" id="SSF69864">
    <property type="entry name" value="Argininosuccinate synthetase, C-terminal domain"/>
    <property type="match status" value="1"/>
</dbReference>
<dbReference type="PROSITE" id="PS00564">
    <property type="entry name" value="ARGININOSUCCIN_SYN_1"/>
    <property type="match status" value="1"/>
</dbReference>
<dbReference type="PROSITE" id="PS00565">
    <property type="entry name" value="ARGININOSUCCIN_SYN_2"/>
    <property type="match status" value="1"/>
</dbReference>
<sequence length="394" mass="43888">MVKKVALAYSGGLDTSVCIPILKEKYGYDEVITISVDVGQPEEEIRKADAKAQKISNKHYTIDAKEEFVRDYIFPLIKANGNYEGYVMGTSVARPLIAKKVVEAAKKEGAIALAHGCTGKGNDQLRFEAVFRQTDMDVIAPMREMNLTREWEINYAKEHGIPVEATKSKPWSVDENIWSRSIEGGRLEDPSFVPPEEIFEWTKSAEDAPNEPRIVDIDFEAGVPVAIDGEKLGGYALVKKMNEIAGENGVGRTDMIEDRVLGLKARENYEHPAATVLLAAHADLEKLVLTRGELKFKKIVEEQWSEMAYAGLVDDPLFADLNAFIDKSQERVTGTVKVKLYKGALTILARSSPNALYSEDLVSFDSQTIDQKDAEGFAKYHGFQARMYRKVVGK</sequence>
<comment type="catalytic activity">
    <reaction evidence="1">
        <text>L-citrulline + L-aspartate + ATP = 2-(N(omega)-L-arginino)succinate + AMP + diphosphate + H(+)</text>
        <dbReference type="Rhea" id="RHEA:10932"/>
        <dbReference type="ChEBI" id="CHEBI:15378"/>
        <dbReference type="ChEBI" id="CHEBI:29991"/>
        <dbReference type="ChEBI" id="CHEBI:30616"/>
        <dbReference type="ChEBI" id="CHEBI:33019"/>
        <dbReference type="ChEBI" id="CHEBI:57472"/>
        <dbReference type="ChEBI" id="CHEBI:57743"/>
        <dbReference type="ChEBI" id="CHEBI:456215"/>
        <dbReference type="EC" id="6.3.4.5"/>
    </reaction>
</comment>
<comment type="pathway">
    <text evidence="1">Amino-acid biosynthesis; L-arginine biosynthesis; L-arginine from L-ornithine and carbamoyl phosphate: step 2/3.</text>
</comment>
<comment type="subunit">
    <text evidence="1">Homotetramer.</text>
</comment>
<comment type="subcellular location">
    <subcellularLocation>
        <location evidence="1">Cytoplasm</location>
    </subcellularLocation>
</comment>
<comment type="similarity">
    <text evidence="1">Belongs to the argininosuccinate synthase family. Type 1 subfamily.</text>
</comment>
<comment type="sequence caution" evidence="2">
    <conflict type="erroneous initiation">
        <sequence resource="EMBL-CDS" id="AAM29733"/>
    </conflict>
</comment>
<evidence type="ECO:0000255" key="1">
    <source>
        <dbReference type="HAMAP-Rule" id="MF_00005"/>
    </source>
</evidence>
<evidence type="ECO:0000305" key="2"/>
<feature type="chain" id="PRO_0000148678" description="Argininosuccinate synthase">
    <location>
        <begin position="1"/>
        <end position="394"/>
    </location>
</feature>
<feature type="binding site" evidence="1">
    <location>
        <begin position="8"/>
        <end position="16"/>
    </location>
    <ligand>
        <name>ATP</name>
        <dbReference type="ChEBI" id="CHEBI:30616"/>
    </ligand>
</feature>
<feature type="binding site" evidence="1">
    <location>
        <position position="86"/>
    </location>
    <ligand>
        <name>L-citrulline</name>
        <dbReference type="ChEBI" id="CHEBI:57743"/>
    </ligand>
</feature>
<feature type="binding site" evidence="1">
    <location>
        <position position="91"/>
    </location>
    <ligand>
        <name>L-citrulline</name>
        <dbReference type="ChEBI" id="CHEBI:57743"/>
    </ligand>
</feature>
<feature type="binding site" evidence="1">
    <location>
        <position position="116"/>
    </location>
    <ligand>
        <name>ATP</name>
        <dbReference type="ChEBI" id="CHEBI:30616"/>
    </ligand>
</feature>
<feature type="binding site" evidence="1">
    <location>
        <position position="118"/>
    </location>
    <ligand>
        <name>L-aspartate</name>
        <dbReference type="ChEBI" id="CHEBI:29991"/>
    </ligand>
</feature>
<feature type="binding site" evidence="1">
    <location>
        <position position="122"/>
    </location>
    <ligand>
        <name>L-aspartate</name>
        <dbReference type="ChEBI" id="CHEBI:29991"/>
    </ligand>
</feature>
<feature type="binding site" evidence="1">
    <location>
        <position position="122"/>
    </location>
    <ligand>
        <name>L-citrulline</name>
        <dbReference type="ChEBI" id="CHEBI:57743"/>
    </ligand>
</feature>
<feature type="binding site" evidence="1">
    <location>
        <position position="123"/>
    </location>
    <ligand>
        <name>L-aspartate</name>
        <dbReference type="ChEBI" id="CHEBI:29991"/>
    </ligand>
</feature>
<feature type="binding site" evidence="1">
    <location>
        <position position="126"/>
    </location>
    <ligand>
        <name>L-citrulline</name>
        <dbReference type="ChEBI" id="CHEBI:57743"/>
    </ligand>
</feature>
<feature type="binding site" evidence="1">
    <location>
        <position position="172"/>
    </location>
    <ligand>
        <name>L-citrulline</name>
        <dbReference type="ChEBI" id="CHEBI:57743"/>
    </ligand>
</feature>
<feature type="binding site" evidence="1">
    <location>
        <position position="181"/>
    </location>
    <ligand>
        <name>L-citrulline</name>
        <dbReference type="ChEBI" id="CHEBI:57743"/>
    </ligand>
</feature>
<feature type="binding site" evidence="1">
    <location>
        <position position="257"/>
    </location>
    <ligand>
        <name>L-citrulline</name>
        <dbReference type="ChEBI" id="CHEBI:57743"/>
    </ligand>
</feature>
<feature type="binding site" evidence="1">
    <location>
        <position position="269"/>
    </location>
    <ligand>
        <name>L-citrulline</name>
        <dbReference type="ChEBI" id="CHEBI:57743"/>
    </ligand>
</feature>
<gene>
    <name evidence="1" type="primary">argG</name>
    <name type="ordered locus">MM_0037</name>
</gene>
<protein>
    <recommendedName>
        <fullName evidence="1">Argininosuccinate synthase</fullName>
        <ecNumber evidence="1">6.3.4.5</ecNumber>
    </recommendedName>
    <alternativeName>
        <fullName evidence="1">Citrulline--aspartate ligase</fullName>
    </alternativeName>
</protein>
<organism>
    <name type="scientific">Methanosarcina mazei (strain ATCC BAA-159 / DSM 3647 / Goe1 / Go1 / JCM 11833 / OCM 88)</name>
    <name type="common">Methanosarcina frisia</name>
    <dbReference type="NCBI Taxonomy" id="192952"/>
    <lineage>
        <taxon>Archaea</taxon>
        <taxon>Methanobacteriati</taxon>
        <taxon>Methanobacteriota</taxon>
        <taxon>Stenosarchaea group</taxon>
        <taxon>Methanomicrobia</taxon>
        <taxon>Methanosarcinales</taxon>
        <taxon>Methanosarcinaceae</taxon>
        <taxon>Methanosarcina</taxon>
    </lineage>
</organism>
<keyword id="KW-0028">Amino-acid biosynthesis</keyword>
<keyword id="KW-0055">Arginine biosynthesis</keyword>
<keyword id="KW-0067">ATP-binding</keyword>
<keyword id="KW-0963">Cytoplasm</keyword>
<keyword id="KW-0436">Ligase</keyword>
<keyword id="KW-0547">Nucleotide-binding</keyword>
<proteinExistence type="inferred from homology"/>
<reference key="1">
    <citation type="journal article" date="2002" name="J. Mol. Microbiol. Biotechnol.">
        <title>The genome of Methanosarcina mazei: evidence for lateral gene transfer between Bacteria and Archaea.</title>
        <authorList>
            <person name="Deppenmeier U."/>
            <person name="Johann A."/>
            <person name="Hartsch T."/>
            <person name="Merkl R."/>
            <person name="Schmitz R.A."/>
            <person name="Martinez-Arias R."/>
            <person name="Henne A."/>
            <person name="Wiezer A."/>
            <person name="Baeumer S."/>
            <person name="Jacobi C."/>
            <person name="Brueggemann H."/>
            <person name="Lienard T."/>
            <person name="Christmann A."/>
            <person name="Boemecke M."/>
            <person name="Steckel S."/>
            <person name="Bhattacharyya A."/>
            <person name="Lykidis A."/>
            <person name="Overbeek R."/>
            <person name="Klenk H.-P."/>
            <person name="Gunsalus R.P."/>
            <person name="Fritz H.-J."/>
            <person name="Gottschalk G."/>
        </authorList>
    </citation>
    <scope>NUCLEOTIDE SEQUENCE [LARGE SCALE GENOMIC DNA]</scope>
    <source>
        <strain>ATCC BAA-159 / DSM 3647 / Goe1 / Go1 / JCM 11833 / OCM 88</strain>
    </source>
</reference>
<name>ASSY_METMA</name>